<gene>
    <name type="primary">AZI2</name>
</gene>
<proteinExistence type="evidence at transcript level"/>
<protein>
    <recommendedName>
        <fullName>5-azacytidine-induced protein 2</fullName>
    </recommendedName>
</protein>
<sequence length="392" mass="44835">MDALVEDDICILNHEKAHKRDTVTPVSIYSGDESVASHFALVTAYEDIKKRLKDSEKENSLLKKRIRFLEEKLIARFDEETSSVGREQVNKAYHAYREVCIDRDNLKSKLDKMNKDNSESLKVLNEQLQSKEVELLQPRTEVETQQVMRNLNPPSSNWEVEKLSCDLKIHGLEQELELMRKECSDLKIELQKAKQTDPYQEDNLKSRDLQKLSISSDNMQHAYWELKREMSNLHLVTQVQAELLRKLKTSTAIKKACAPVGCSEDLGRDSTKLHLMNFTATYTRHPPVSPNGKALCHTASSPLPGDVKVLSEKAILQSWTDNERSIPNDGTCFQEHSSYGRNSLEDNSWVFPSPPKSSETAFGETKTKTLPLPNLPPLHYLDQHNQNCLYKN</sequence>
<name>AZI2_PONAB</name>
<evidence type="ECO:0000250" key="1">
    <source>
        <dbReference type="UniProtKB" id="Q4KMA0"/>
    </source>
</evidence>
<evidence type="ECO:0000250" key="2">
    <source>
        <dbReference type="UniProtKB" id="Q9H6S1"/>
    </source>
</evidence>
<evidence type="ECO:0000250" key="3">
    <source>
        <dbReference type="UniProtKB" id="Q9QYP6"/>
    </source>
</evidence>
<evidence type="ECO:0000255" key="4"/>
<evidence type="ECO:0000256" key="5">
    <source>
        <dbReference type="SAM" id="MobiDB-lite"/>
    </source>
</evidence>
<reference key="1">
    <citation type="submission" date="2004-11" db="EMBL/GenBank/DDBJ databases">
        <authorList>
            <consortium name="The German cDNA consortium"/>
        </authorList>
    </citation>
    <scope>NUCLEOTIDE SEQUENCE [LARGE SCALE MRNA]</scope>
    <source>
        <tissue>Brain cortex</tissue>
    </source>
</reference>
<organism>
    <name type="scientific">Pongo abelii</name>
    <name type="common">Sumatran orangutan</name>
    <name type="synonym">Pongo pygmaeus abelii</name>
    <dbReference type="NCBI Taxonomy" id="9601"/>
    <lineage>
        <taxon>Eukaryota</taxon>
        <taxon>Metazoa</taxon>
        <taxon>Chordata</taxon>
        <taxon>Craniata</taxon>
        <taxon>Vertebrata</taxon>
        <taxon>Euteleostomi</taxon>
        <taxon>Mammalia</taxon>
        <taxon>Eutheria</taxon>
        <taxon>Euarchontoglires</taxon>
        <taxon>Primates</taxon>
        <taxon>Haplorrhini</taxon>
        <taxon>Catarrhini</taxon>
        <taxon>Hominidae</taxon>
        <taxon>Pongo</taxon>
    </lineage>
</organism>
<dbReference type="EMBL" id="CR858078">
    <property type="protein sequence ID" value="CAH90317.1"/>
    <property type="molecule type" value="mRNA"/>
</dbReference>
<dbReference type="RefSeq" id="NP_001127269.1">
    <property type="nucleotide sequence ID" value="NM_001133797.1"/>
</dbReference>
<dbReference type="SMR" id="Q5RD40"/>
<dbReference type="FunCoup" id="Q5RD40">
    <property type="interactions" value="795"/>
</dbReference>
<dbReference type="STRING" id="9601.ENSPPYP00000015723"/>
<dbReference type="GeneID" id="100174325"/>
<dbReference type="KEGG" id="pon:100174325"/>
<dbReference type="CTD" id="64343"/>
<dbReference type="eggNOG" id="ENOG502QV07">
    <property type="taxonomic scope" value="Eukaryota"/>
</dbReference>
<dbReference type="InParanoid" id="Q5RD40"/>
<dbReference type="OrthoDB" id="8744179at2759"/>
<dbReference type="Proteomes" id="UP000001595">
    <property type="component" value="Unplaced"/>
</dbReference>
<dbReference type="GO" id="GO:0005737">
    <property type="term" value="C:cytoplasm"/>
    <property type="evidence" value="ECO:0007669"/>
    <property type="project" value="UniProtKB-SubCell"/>
</dbReference>
<dbReference type="InterPro" id="IPR024581">
    <property type="entry name" value="TBD"/>
</dbReference>
<dbReference type="InterPro" id="IPR051891">
    <property type="entry name" value="TBK1-IKBKE_adapters"/>
</dbReference>
<dbReference type="PANTHER" id="PTHR14432:SF6">
    <property type="entry name" value="5-AZACYTIDINE-INDUCED PROTEIN 2"/>
    <property type="match status" value="1"/>
</dbReference>
<dbReference type="PANTHER" id="PTHR14432">
    <property type="entry name" value="PROSAPIP2 PROTEIN/5-AZACYTIDINE INDUCED GENE 2"/>
    <property type="match status" value="1"/>
</dbReference>
<dbReference type="Pfam" id="PF12845">
    <property type="entry name" value="TBD"/>
    <property type="match status" value="1"/>
</dbReference>
<comment type="function">
    <text evidence="2">Adapter protein which binds TBK1 and IKBKE playing a role in antiviral innate immunity (By similarity). Activates serine/threonine-protein kinase TBK1 and facilitates its oligomerization (By similarity). Enhances the phosphorylation of NF-kappa-B p65 subunit RELA by TBK1 (By similarity). Promotes TBK1-induced as well as TNF-alpha or PMA-induced activation of NF-kappa-B (By similarity). Participates in IFNB promoter activation via TICAM1 (By similarity).</text>
</comment>
<comment type="subunit">
    <text evidence="2 3">Homodimer (By similarity). Interacts with IKBKE, TBK1 and TICAM1 (By similarity). Interacts with TAX1BP1 (By similarity). Interacts with CALCOCO2 (By similarity).</text>
</comment>
<comment type="subcellular location">
    <subcellularLocation>
        <location evidence="2">Cytoplasm</location>
    </subcellularLocation>
</comment>
<comment type="PTM">
    <text evidence="3">Ubiquitinated via 'Lys-48'-linked polyubiquitination by TRIM38, leading to its degradation.</text>
</comment>
<keyword id="KW-0175">Coiled coil</keyword>
<keyword id="KW-0963">Cytoplasm</keyword>
<keyword id="KW-0597">Phosphoprotein</keyword>
<keyword id="KW-1185">Reference proteome</keyword>
<keyword id="KW-0832">Ubl conjugation</keyword>
<accession>Q5RD40</accession>
<feature type="chain" id="PRO_0000280605" description="5-azacytidine-induced protein 2">
    <location>
        <begin position="1"/>
        <end position="392"/>
    </location>
</feature>
<feature type="region of interest" description="Homodimerization" evidence="3">
    <location>
        <begin position="1"/>
        <end position="197"/>
    </location>
</feature>
<feature type="region of interest" description="Interaction with TBK1 and IKBKE" evidence="2">
    <location>
        <begin position="216"/>
        <end position="257"/>
    </location>
</feature>
<feature type="region of interest" description="Disordered" evidence="5">
    <location>
        <begin position="345"/>
        <end position="365"/>
    </location>
</feature>
<feature type="coiled-coil region" evidence="4">
    <location>
        <begin position="40"/>
        <end position="76"/>
    </location>
</feature>
<feature type="coiled-coil region" evidence="4">
    <location>
        <begin position="102"/>
        <end position="135"/>
    </location>
</feature>
<feature type="coiled-coil region" evidence="4">
    <location>
        <begin position="166"/>
        <end position="196"/>
    </location>
</feature>
<feature type="modified residue" description="Phosphoserine" evidence="1">
    <location>
        <position position="318"/>
    </location>
</feature>
<feature type="modified residue" description="Phosphoserine" evidence="2">
    <location>
        <position position="353"/>
    </location>
</feature>